<feature type="signal peptide" evidence="2">
    <location>
        <begin position="1"/>
        <end position="28"/>
    </location>
</feature>
<feature type="chain" id="PRO_0000033382" description="Beta-fructofuranosidase, insoluble isoenzyme 4">
    <location>
        <begin position="29"/>
        <end position="590"/>
    </location>
</feature>
<feature type="active site" evidence="3">
    <location>
        <position position="74"/>
    </location>
</feature>
<feature type="binding site" evidence="1">
    <location>
        <begin position="71"/>
        <end position="74"/>
    </location>
    <ligand>
        <name>substrate</name>
    </ligand>
</feature>
<feature type="binding site" evidence="1">
    <location>
        <position position="90"/>
    </location>
    <ligand>
        <name>substrate</name>
    </ligand>
</feature>
<feature type="binding site" evidence="1">
    <location>
        <position position="98"/>
    </location>
    <ligand>
        <name>substrate</name>
    </ligand>
</feature>
<feature type="binding site" evidence="1">
    <location>
        <begin position="133"/>
        <end position="134"/>
    </location>
    <ligand>
        <name>substrate</name>
    </ligand>
</feature>
<feature type="binding site" evidence="1">
    <location>
        <begin position="198"/>
        <end position="199"/>
    </location>
    <ligand>
        <name>substrate</name>
    </ligand>
</feature>
<feature type="binding site" evidence="1">
    <location>
        <position position="253"/>
    </location>
    <ligand>
        <name>substrate</name>
    </ligand>
</feature>
<feature type="binding site" evidence="1">
    <location>
        <position position="287"/>
    </location>
    <ligand>
        <name>substrate</name>
    </ligand>
</feature>
<feature type="glycosylation site" description="N-linked (GlcNAc...) asparagine" evidence="2">
    <location>
        <position position="94"/>
    </location>
</feature>
<feature type="glycosylation site" description="N-linked (GlcNAc...) asparagine" evidence="2">
    <location>
        <position position="167"/>
    </location>
</feature>
<feature type="glycosylation site" description="N-linked (GlcNAc...) asparagine" evidence="2">
    <location>
        <position position="247"/>
    </location>
</feature>
<feature type="glycosylation site" description="N-linked (GlcNAc...) asparagine" evidence="2">
    <location>
        <position position="345"/>
    </location>
</feature>
<feature type="glycosylation site" description="N-linked (GlcNAc...) asparagine" evidence="2">
    <location>
        <position position="565"/>
    </location>
</feature>
<feature type="disulfide bond" evidence="1">
    <location>
        <begin position="445"/>
        <end position="491"/>
    </location>
</feature>
<feature type="sequence conflict" description="In Ref. 2; BAD05180." evidence="6" ref="2">
    <original>L</original>
    <variation>P</variation>
    <location>
        <position position="226"/>
    </location>
</feature>
<dbReference type="EC" id="3.2.1.26"/>
<dbReference type="EMBL" id="AY578161">
    <property type="protein sequence ID" value="AAT84404.1"/>
    <property type="molecule type" value="mRNA"/>
</dbReference>
<dbReference type="EMBL" id="AB154521">
    <property type="protein sequence ID" value="BAD05180.1"/>
    <property type="molecule type" value="mRNA"/>
</dbReference>
<dbReference type="EMBL" id="AP004365">
    <property type="protein sequence ID" value="BAD88258.1"/>
    <property type="molecule type" value="Genomic_DNA"/>
</dbReference>
<dbReference type="EMBL" id="AP008207">
    <property type="protein sequence ID" value="BAF07418.1"/>
    <property type="molecule type" value="Genomic_DNA"/>
</dbReference>
<dbReference type="EMBL" id="AP014957">
    <property type="protein sequence ID" value="BAS76386.1"/>
    <property type="molecule type" value="Genomic_DNA"/>
</dbReference>
<dbReference type="EMBL" id="CM000138">
    <property type="protein sequence ID" value="EEE56070.1"/>
    <property type="molecule type" value="Genomic_DNA"/>
</dbReference>
<dbReference type="EMBL" id="AK067444">
    <property type="protein sequence ID" value="BAG90423.1"/>
    <property type="molecule type" value="mRNA"/>
</dbReference>
<dbReference type="RefSeq" id="XP_015622113.1">
    <property type="nucleotide sequence ID" value="XM_015766627.1"/>
</dbReference>
<dbReference type="SMR" id="Q5JJV0"/>
<dbReference type="FunCoup" id="Q5JJV0">
    <property type="interactions" value="19"/>
</dbReference>
<dbReference type="STRING" id="39947.Q5JJV0"/>
<dbReference type="CAZy" id="GH32">
    <property type="family name" value="Glycoside Hydrolase Family 32"/>
</dbReference>
<dbReference type="GlyCosmos" id="Q5JJV0">
    <property type="glycosylation" value="5 sites, No reported glycans"/>
</dbReference>
<dbReference type="PaxDb" id="39947-Q5JJV0"/>
<dbReference type="EnsemblPlants" id="Os01t0966700-01">
    <property type="protein sequence ID" value="Os01t0966700-01"/>
    <property type="gene ID" value="Os01g0966700"/>
</dbReference>
<dbReference type="Gramene" id="Os01t0966700-01">
    <property type="protein sequence ID" value="Os01t0966700-01"/>
    <property type="gene ID" value="Os01g0966700"/>
</dbReference>
<dbReference type="KEGG" id="dosa:Os01g0966700"/>
<dbReference type="eggNOG" id="KOG0228">
    <property type="taxonomic scope" value="Eukaryota"/>
</dbReference>
<dbReference type="HOGENOM" id="CLU_001528_6_0_1"/>
<dbReference type="InParanoid" id="Q5JJV0"/>
<dbReference type="OMA" id="GGRACIM"/>
<dbReference type="OrthoDB" id="202537at2759"/>
<dbReference type="PlantReactome" id="R-OSA-1119626">
    <property type="pathway name" value="Fructan degradation"/>
</dbReference>
<dbReference type="Proteomes" id="UP000000763">
    <property type="component" value="Chromosome 1"/>
</dbReference>
<dbReference type="Proteomes" id="UP000007752">
    <property type="component" value="Chromosome 1"/>
</dbReference>
<dbReference type="Proteomes" id="UP000059680">
    <property type="component" value="Chromosome 1"/>
</dbReference>
<dbReference type="ExpressionAtlas" id="Q5JJV0">
    <property type="expression patterns" value="baseline and differential"/>
</dbReference>
<dbReference type="GO" id="GO:0048046">
    <property type="term" value="C:apoplast"/>
    <property type="evidence" value="ECO:0007669"/>
    <property type="project" value="UniProtKB-SubCell"/>
</dbReference>
<dbReference type="GO" id="GO:0004564">
    <property type="term" value="F:beta-fructofuranosidase activity"/>
    <property type="evidence" value="ECO:0007669"/>
    <property type="project" value="UniProtKB-EC"/>
</dbReference>
<dbReference type="GO" id="GO:0005975">
    <property type="term" value="P:carbohydrate metabolic process"/>
    <property type="evidence" value="ECO:0007669"/>
    <property type="project" value="InterPro"/>
</dbReference>
<dbReference type="CDD" id="cd18624">
    <property type="entry name" value="GH32_Fruct1-like"/>
    <property type="match status" value="1"/>
</dbReference>
<dbReference type="FunFam" id="2.115.10.20:FF:000001">
    <property type="entry name" value="Beta-fructofuranosidase, insoluble isoenzyme CWINV1"/>
    <property type="match status" value="1"/>
</dbReference>
<dbReference type="FunFam" id="2.60.120.560:FF:000002">
    <property type="entry name" value="Beta-fructofuranosidase, insoluble isoenzyme CWINV1"/>
    <property type="match status" value="1"/>
</dbReference>
<dbReference type="Gene3D" id="2.60.120.560">
    <property type="entry name" value="Exo-inulinase, domain 1"/>
    <property type="match status" value="1"/>
</dbReference>
<dbReference type="Gene3D" id="2.115.10.20">
    <property type="entry name" value="Glycosyl hydrolase domain, family 43"/>
    <property type="match status" value="1"/>
</dbReference>
<dbReference type="InterPro" id="IPR013320">
    <property type="entry name" value="ConA-like_dom_sf"/>
</dbReference>
<dbReference type="InterPro" id="IPR050551">
    <property type="entry name" value="Fructan_Metab_Enzymes"/>
</dbReference>
<dbReference type="InterPro" id="IPR001362">
    <property type="entry name" value="Glyco_hydro_32"/>
</dbReference>
<dbReference type="InterPro" id="IPR018053">
    <property type="entry name" value="Glyco_hydro_32_AS"/>
</dbReference>
<dbReference type="InterPro" id="IPR013189">
    <property type="entry name" value="Glyco_hydro_32_C"/>
</dbReference>
<dbReference type="InterPro" id="IPR013148">
    <property type="entry name" value="Glyco_hydro_32_N"/>
</dbReference>
<dbReference type="InterPro" id="IPR023296">
    <property type="entry name" value="Glyco_hydro_beta-prop_sf"/>
</dbReference>
<dbReference type="PANTHER" id="PTHR31953">
    <property type="entry name" value="BETA-FRUCTOFURANOSIDASE, INSOLUBLE ISOENZYME CWINV1-RELATED"/>
    <property type="match status" value="1"/>
</dbReference>
<dbReference type="Pfam" id="PF08244">
    <property type="entry name" value="Glyco_hydro_32C"/>
    <property type="match status" value="1"/>
</dbReference>
<dbReference type="Pfam" id="PF00251">
    <property type="entry name" value="Glyco_hydro_32N"/>
    <property type="match status" value="1"/>
</dbReference>
<dbReference type="SMART" id="SM00640">
    <property type="entry name" value="Glyco_32"/>
    <property type="match status" value="1"/>
</dbReference>
<dbReference type="SUPFAM" id="SSF75005">
    <property type="entry name" value="Arabinanase/levansucrase/invertase"/>
    <property type="match status" value="1"/>
</dbReference>
<dbReference type="SUPFAM" id="SSF49899">
    <property type="entry name" value="Concanavalin A-like lectins/glucanases"/>
    <property type="match status" value="1"/>
</dbReference>
<dbReference type="PROSITE" id="PS00609">
    <property type="entry name" value="GLYCOSYL_HYDROL_F32"/>
    <property type="match status" value="1"/>
</dbReference>
<protein>
    <recommendedName>
        <fullName>Beta-fructofuranosidase, insoluble isoenzyme 4</fullName>
        <ecNumber>3.2.1.26</ecNumber>
    </recommendedName>
    <alternativeName>
        <fullName>Cell wall beta-fructosidase 4</fullName>
    </alternativeName>
    <alternativeName>
        <fullName>Invertase 4</fullName>
    </alternativeName>
    <alternativeName>
        <fullName>OsCIN4</fullName>
    </alternativeName>
    <alternativeName>
        <fullName>Sucrose hydrolase 4</fullName>
    </alternativeName>
</protein>
<proteinExistence type="evidence at transcript level"/>
<keyword id="KW-0052">Apoplast</keyword>
<keyword id="KW-0134">Cell wall</keyword>
<keyword id="KW-1015">Disulfide bond</keyword>
<keyword id="KW-0325">Glycoprotein</keyword>
<keyword id="KW-0326">Glycosidase</keyword>
<keyword id="KW-0378">Hydrolase</keyword>
<keyword id="KW-1185">Reference proteome</keyword>
<keyword id="KW-0964">Secreted</keyword>
<keyword id="KW-0732">Signal</keyword>
<comment type="function">
    <text>May play a role in sucrose partitioning during seed development and in stress response.</text>
</comment>
<comment type="catalytic activity">
    <reaction evidence="3">
        <text>Hydrolysis of terminal non-reducing beta-D-fructofuranoside residues in beta-D-fructofuranosides.</text>
        <dbReference type="EC" id="3.2.1.26"/>
    </reaction>
</comment>
<comment type="subcellular location">
    <subcellularLocation>
        <location evidence="6">Secreted</location>
        <location evidence="6">Extracellular space</location>
        <location evidence="6">Apoplast</location>
    </subcellularLocation>
    <subcellularLocation>
        <location evidence="6">Secreted</location>
        <location evidence="6">Cell wall</location>
    </subcellularLocation>
    <text evidence="6">Associated to the cell wall.</text>
</comment>
<comment type="tissue specificity">
    <text evidence="5">Expressed in leaves. Expressed at moderate levels in roots and flowers, and weakly in seeds.</text>
</comment>
<comment type="developmental stage">
    <text evidence="4 5">Expressed from 1 to 10 days after flowering.</text>
</comment>
<comment type="induction">
    <text evidence="5">By rice blast fungus (M.grisea) 12 hours after infection.</text>
</comment>
<comment type="similarity">
    <text evidence="6">Belongs to the glycosyl hydrolase 32 family.</text>
</comment>
<organism>
    <name type="scientific">Oryza sativa subsp. japonica</name>
    <name type="common">Rice</name>
    <dbReference type="NCBI Taxonomy" id="39947"/>
    <lineage>
        <taxon>Eukaryota</taxon>
        <taxon>Viridiplantae</taxon>
        <taxon>Streptophyta</taxon>
        <taxon>Embryophyta</taxon>
        <taxon>Tracheophyta</taxon>
        <taxon>Spermatophyta</taxon>
        <taxon>Magnoliopsida</taxon>
        <taxon>Liliopsida</taxon>
        <taxon>Poales</taxon>
        <taxon>Poaceae</taxon>
        <taxon>BOP clade</taxon>
        <taxon>Oryzoideae</taxon>
        <taxon>Oryzeae</taxon>
        <taxon>Oryzinae</taxon>
        <taxon>Oryza</taxon>
        <taxon>Oryza sativa</taxon>
    </lineage>
</organism>
<evidence type="ECO:0000250" key="1"/>
<evidence type="ECO:0000255" key="2"/>
<evidence type="ECO:0000255" key="3">
    <source>
        <dbReference type="PROSITE-ProRule" id="PRU10067"/>
    </source>
</evidence>
<evidence type="ECO:0000269" key="4">
    <source>
    </source>
</evidence>
<evidence type="ECO:0000269" key="5">
    <source>
    </source>
</evidence>
<evidence type="ECO:0000305" key="6"/>
<evidence type="ECO:0000312" key="7">
    <source>
        <dbReference type="EMBL" id="EEE56070.1"/>
    </source>
</evidence>
<name>INV4_ORYSJ</name>
<accession>Q5JJV0</accession>
<accession>Q0JFR0</accession>
<accession>Q75SP0</accession>
<reference key="1">
    <citation type="journal article" date="2005" name="Plant Cell Rep.">
        <title>Molecular cloning and expression analysis of the cell-wall invertase gene family in rice (Oryza sativa L.).</title>
        <authorList>
            <person name="Cho J.-I."/>
            <person name="Lee S.-K."/>
            <person name="Ko S."/>
            <person name="Kim H.-K."/>
            <person name="Jun S.-H."/>
            <person name="Lee Y.-H."/>
            <person name="Bhoo S.H."/>
            <person name="Lee K.-W."/>
            <person name="An G."/>
            <person name="Hahn T.-R."/>
            <person name="Jeon J.-S."/>
        </authorList>
    </citation>
    <scope>NUCLEOTIDE SEQUENCE [MRNA]</scope>
    <scope>TISSUE SPECIFICITY</scope>
    <scope>DEVELOPMENTAL STAGE</scope>
    <scope>INDUCTION</scope>
    <source>
        <strain>cv. Nipponbare</strain>
    </source>
</reference>
<reference key="2">
    <citation type="submission" date="2003-12" db="EMBL/GenBank/DDBJ databases">
        <authorList>
            <person name="Hirose T."/>
            <person name="Terao T."/>
        </authorList>
    </citation>
    <scope>NUCLEOTIDE SEQUENCE [MRNA]</scope>
    <source>
        <strain>cv. Nipponbare</strain>
        <tissue>Panicle</tissue>
    </source>
</reference>
<reference key="3">
    <citation type="journal article" date="2002" name="Nature">
        <title>The genome sequence and structure of rice chromosome 1.</title>
        <authorList>
            <person name="Sasaki T."/>
            <person name="Matsumoto T."/>
            <person name="Yamamoto K."/>
            <person name="Sakata K."/>
            <person name="Baba T."/>
            <person name="Katayose Y."/>
            <person name="Wu J."/>
            <person name="Niimura Y."/>
            <person name="Cheng Z."/>
            <person name="Nagamura Y."/>
            <person name="Antonio B.A."/>
            <person name="Kanamori H."/>
            <person name="Hosokawa S."/>
            <person name="Masukawa M."/>
            <person name="Arikawa K."/>
            <person name="Chiden Y."/>
            <person name="Hayashi M."/>
            <person name="Okamoto M."/>
            <person name="Ando T."/>
            <person name="Aoki H."/>
            <person name="Arita K."/>
            <person name="Hamada M."/>
            <person name="Harada C."/>
            <person name="Hijishita S."/>
            <person name="Honda M."/>
            <person name="Ichikawa Y."/>
            <person name="Idonuma A."/>
            <person name="Iijima M."/>
            <person name="Ikeda M."/>
            <person name="Ikeno M."/>
            <person name="Ito S."/>
            <person name="Ito T."/>
            <person name="Ito Y."/>
            <person name="Ito Y."/>
            <person name="Iwabuchi A."/>
            <person name="Kamiya K."/>
            <person name="Karasawa W."/>
            <person name="Katagiri S."/>
            <person name="Kikuta A."/>
            <person name="Kobayashi N."/>
            <person name="Kono I."/>
            <person name="Machita K."/>
            <person name="Maehara T."/>
            <person name="Mizuno H."/>
            <person name="Mizubayashi T."/>
            <person name="Mukai Y."/>
            <person name="Nagasaki H."/>
            <person name="Nakashima M."/>
            <person name="Nakama Y."/>
            <person name="Nakamichi Y."/>
            <person name="Nakamura M."/>
            <person name="Namiki N."/>
            <person name="Negishi M."/>
            <person name="Ohta I."/>
            <person name="Ono N."/>
            <person name="Saji S."/>
            <person name="Sakai K."/>
            <person name="Shibata M."/>
            <person name="Shimokawa T."/>
            <person name="Shomura A."/>
            <person name="Song J."/>
            <person name="Takazaki Y."/>
            <person name="Terasawa K."/>
            <person name="Tsuji K."/>
            <person name="Waki K."/>
            <person name="Yamagata H."/>
            <person name="Yamane H."/>
            <person name="Yoshiki S."/>
            <person name="Yoshihara R."/>
            <person name="Yukawa K."/>
            <person name="Zhong H."/>
            <person name="Iwama H."/>
            <person name="Endo T."/>
            <person name="Ito H."/>
            <person name="Hahn J.H."/>
            <person name="Kim H.-I."/>
            <person name="Eun M.-Y."/>
            <person name="Yano M."/>
            <person name="Jiang J."/>
            <person name="Gojobori T."/>
        </authorList>
    </citation>
    <scope>NUCLEOTIDE SEQUENCE [LARGE SCALE GENOMIC DNA]</scope>
    <source>
        <strain>cv. Nipponbare</strain>
    </source>
</reference>
<reference key="4">
    <citation type="journal article" date="2005" name="Nature">
        <title>The map-based sequence of the rice genome.</title>
        <authorList>
            <consortium name="International rice genome sequencing project (IRGSP)"/>
        </authorList>
    </citation>
    <scope>NUCLEOTIDE SEQUENCE [LARGE SCALE GENOMIC DNA]</scope>
    <source>
        <strain>cv. Nipponbare</strain>
    </source>
</reference>
<reference key="5">
    <citation type="journal article" date="2008" name="Nucleic Acids Res.">
        <title>The rice annotation project database (RAP-DB): 2008 update.</title>
        <authorList>
            <consortium name="The rice annotation project (RAP)"/>
        </authorList>
    </citation>
    <scope>GENOME REANNOTATION</scope>
    <source>
        <strain>cv. Nipponbare</strain>
    </source>
</reference>
<reference key="6">
    <citation type="journal article" date="2013" name="Rice">
        <title>Improvement of the Oryza sativa Nipponbare reference genome using next generation sequence and optical map data.</title>
        <authorList>
            <person name="Kawahara Y."/>
            <person name="de la Bastide M."/>
            <person name="Hamilton J.P."/>
            <person name="Kanamori H."/>
            <person name="McCombie W.R."/>
            <person name="Ouyang S."/>
            <person name="Schwartz D.C."/>
            <person name="Tanaka T."/>
            <person name="Wu J."/>
            <person name="Zhou S."/>
            <person name="Childs K.L."/>
            <person name="Davidson R.M."/>
            <person name="Lin H."/>
            <person name="Quesada-Ocampo L."/>
            <person name="Vaillancourt B."/>
            <person name="Sakai H."/>
            <person name="Lee S.S."/>
            <person name="Kim J."/>
            <person name="Numa H."/>
            <person name="Itoh T."/>
            <person name="Buell C.R."/>
            <person name="Matsumoto T."/>
        </authorList>
    </citation>
    <scope>GENOME REANNOTATION</scope>
    <source>
        <strain>cv. Nipponbare</strain>
    </source>
</reference>
<reference key="7">
    <citation type="journal article" date="2005" name="PLoS Biol.">
        <title>The genomes of Oryza sativa: a history of duplications.</title>
        <authorList>
            <person name="Yu J."/>
            <person name="Wang J."/>
            <person name="Lin W."/>
            <person name="Li S."/>
            <person name="Li H."/>
            <person name="Zhou J."/>
            <person name="Ni P."/>
            <person name="Dong W."/>
            <person name="Hu S."/>
            <person name="Zeng C."/>
            <person name="Zhang J."/>
            <person name="Zhang Y."/>
            <person name="Li R."/>
            <person name="Xu Z."/>
            <person name="Li S."/>
            <person name="Li X."/>
            <person name="Zheng H."/>
            <person name="Cong L."/>
            <person name="Lin L."/>
            <person name="Yin J."/>
            <person name="Geng J."/>
            <person name="Li G."/>
            <person name="Shi J."/>
            <person name="Liu J."/>
            <person name="Lv H."/>
            <person name="Li J."/>
            <person name="Wang J."/>
            <person name="Deng Y."/>
            <person name="Ran L."/>
            <person name="Shi X."/>
            <person name="Wang X."/>
            <person name="Wu Q."/>
            <person name="Li C."/>
            <person name="Ren X."/>
            <person name="Wang J."/>
            <person name="Wang X."/>
            <person name="Li D."/>
            <person name="Liu D."/>
            <person name="Zhang X."/>
            <person name="Ji Z."/>
            <person name="Zhao W."/>
            <person name="Sun Y."/>
            <person name="Zhang Z."/>
            <person name="Bao J."/>
            <person name="Han Y."/>
            <person name="Dong L."/>
            <person name="Ji J."/>
            <person name="Chen P."/>
            <person name="Wu S."/>
            <person name="Liu J."/>
            <person name="Xiao Y."/>
            <person name="Bu D."/>
            <person name="Tan J."/>
            <person name="Yang L."/>
            <person name="Ye C."/>
            <person name="Zhang J."/>
            <person name="Xu J."/>
            <person name="Zhou Y."/>
            <person name="Yu Y."/>
            <person name="Zhang B."/>
            <person name="Zhuang S."/>
            <person name="Wei H."/>
            <person name="Liu B."/>
            <person name="Lei M."/>
            <person name="Yu H."/>
            <person name="Li Y."/>
            <person name="Xu H."/>
            <person name="Wei S."/>
            <person name="He X."/>
            <person name="Fang L."/>
            <person name="Zhang Z."/>
            <person name="Zhang Y."/>
            <person name="Huang X."/>
            <person name="Su Z."/>
            <person name="Tong W."/>
            <person name="Li J."/>
            <person name="Tong Z."/>
            <person name="Li S."/>
            <person name="Ye J."/>
            <person name="Wang L."/>
            <person name="Fang L."/>
            <person name="Lei T."/>
            <person name="Chen C.-S."/>
            <person name="Chen H.-C."/>
            <person name="Xu Z."/>
            <person name="Li H."/>
            <person name="Huang H."/>
            <person name="Zhang F."/>
            <person name="Xu H."/>
            <person name="Li N."/>
            <person name="Zhao C."/>
            <person name="Li S."/>
            <person name="Dong L."/>
            <person name="Huang Y."/>
            <person name="Li L."/>
            <person name="Xi Y."/>
            <person name="Qi Q."/>
            <person name="Li W."/>
            <person name="Zhang B."/>
            <person name="Hu W."/>
            <person name="Zhang Y."/>
            <person name="Tian X."/>
            <person name="Jiao Y."/>
            <person name="Liang X."/>
            <person name="Jin J."/>
            <person name="Gao L."/>
            <person name="Zheng W."/>
            <person name="Hao B."/>
            <person name="Liu S.-M."/>
            <person name="Wang W."/>
            <person name="Yuan L."/>
            <person name="Cao M."/>
            <person name="McDermott J."/>
            <person name="Samudrala R."/>
            <person name="Wang J."/>
            <person name="Wong G.K.-S."/>
            <person name="Yang H."/>
        </authorList>
    </citation>
    <scope>NUCLEOTIDE SEQUENCE [LARGE SCALE GENOMIC DNA]</scope>
    <source>
        <strain>cv. Nipponbare</strain>
    </source>
</reference>
<reference key="8">
    <citation type="journal article" date="2003" name="Science">
        <title>Collection, mapping, and annotation of over 28,000 cDNA clones from japonica rice.</title>
        <authorList>
            <consortium name="The rice full-length cDNA consortium"/>
        </authorList>
    </citation>
    <scope>NUCLEOTIDE SEQUENCE [LARGE SCALE MRNA]</scope>
    <source>
        <strain>cv. Nipponbare</strain>
    </source>
</reference>
<reference key="9">
    <citation type="journal article" date="2005" name="Plant Cell Physiol.">
        <title>Expression patterns of genes encoding carbohydrate-metabolizing enzymes and their relationship to grain filling in rice (Oryza sativa L.): comparison of caryopses located at different positions in a panicle.</title>
        <authorList>
            <person name="Ishimaru T."/>
            <person name="Hirose T."/>
            <person name="Matsuda T."/>
            <person name="Goto A."/>
            <person name="Takahashi K."/>
            <person name="Sasaki H."/>
            <person name="Terao T."/>
            <person name="Ishii R."/>
            <person name="Ohsugi R."/>
            <person name="Yamagishi T."/>
        </authorList>
    </citation>
    <scope>DEVELOPMENTAL STAGE</scope>
</reference>
<gene>
    <name type="primary">CIN4</name>
    <name type="ordered locus">Os01g0966700</name>
    <name type="ordered locus">LOC_Os01g73580</name>
    <name evidence="7" type="ORF">OsJ_04889</name>
    <name type="ORF">P0458E05.32</name>
</gene>
<sequence length="590" mass="66610">MVMAPIPQPWHQWPFLILFFLVLFSCESNLPCRNGVEATQRVFLYPQSPKVSSIVSKGYRTGYHFQPPKNWINDPNGPMYYNGIYHEFYQYNPNGSVWGNIVWGHSVSTDLINWIRLEPAIEGNTPSDINGCWTGSATILTGDQPVIIYTGADTEKRQVQNIVLPKNRSDPYLREWTKPKNNPLIEPVGPGLNSNQFRDPTTGWIGPDGLWRIAVGAELNGYSAALLYKSKDFMQWTRVDHPLYSSNASNMWECPDFFAVLPGKNNGLDLSAAIPNGAKHVLKMSLDSCDKYMIGVYDLKHDMFVPDTVLDDRRLWLRIDYGNYYASKSFFDSKKGRRIIWGWTNETDSTSDDVAKGWAGIHAIPRTIWLDGDGKRLLQWPIEEVESLRRNEVSHQGLELKKGDLFEIKGTDTLQADVEIDFELTSIDAADPFDPSWLLDTEKHCREADASVHGGLGPFGLVVLASDNMDEHTTVHFRVYKSEQKYMVLLCSDLRRSSLRPGLYTPAYGGFFEYDLEKEKKISLRTLIDRSAVESFGGGGRACIMARVYPAAVVDGATHMYAFNNGSSTVKVSQLKAWSMTRAQVNVRKG</sequence>